<dbReference type="EC" id="1.1.1.136" evidence="4"/>
<dbReference type="EMBL" id="AF035937">
    <property type="protein sequence ID" value="AAF23997.1"/>
    <property type="molecule type" value="Genomic_DNA"/>
</dbReference>
<dbReference type="EMBL" id="AF498417">
    <property type="protein sequence ID" value="AAM27816.1"/>
    <property type="molecule type" value="Genomic_DNA"/>
</dbReference>
<dbReference type="EMBL" id="NFFZ01000002">
    <property type="protein sequence ID" value="OTI64803.1"/>
    <property type="molecule type" value="Genomic_DNA"/>
</dbReference>
<dbReference type="PATRIC" id="fig|287.2664.peg.1858"/>
<dbReference type="BioCyc" id="MetaCyc:MONOMER-18147"/>
<dbReference type="UniPathway" id="UPA00281"/>
<dbReference type="Proteomes" id="UP000194857">
    <property type="component" value="Unassembled WGS sequence"/>
</dbReference>
<dbReference type="GO" id="GO:0051287">
    <property type="term" value="F:NAD binding"/>
    <property type="evidence" value="ECO:0007669"/>
    <property type="project" value="InterPro"/>
</dbReference>
<dbReference type="GO" id="GO:0016628">
    <property type="term" value="F:oxidoreductase activity, acting on the CH-CH group of donors, NAD or NADP as acceptor"/>
    <property type="evidence" value="ECO:0007669"/>
    <property type="project" value="InterPro"/>
</dbReference>
<dbReference type="GO" id="GO:0003979">
    <property type="term" value="F:UDP-glucose 6-dehydrogenase activity"/>
    <property type="evidence" value="ECO:0007669"/>
    <property type="project" value="UniProtKB-EC"/>
</dbReference>
<dbReference type="GO" id="GO:0071555">
    <property type="term" value="P:cell wall organization"/>
    <property type="evidence" value="ECO:0007669"/>
    <property type="project" value="UniProtKB-KW"/>
</dbReference>
<dbReference type="GO" id="GO:0009103">
    <property type="term" value="P:lipopolysaccharide biosynthetic process"/>
    <property type="evidence" value="ECO:0007669"/>
    <property type="project" value="UniProtKB-KW"/>
</dbReference>
<dbReference type="Gene3D" id="3.40.50.720">
    <property type="entry name" value="NAD(P)-binding Rossmann-like Domain"/>
    <property type="match status" value="2"/>
</dbReference>
<dbReference type="InterPro" id="IPR008927">
    <property type="entry name" value="6-PGluconate_DH-like_C_sf"/>
</dbReference>
<dbReference type="InterPro" id="IPR036291">
    <property type="entry name" value="NAD(P)-bd_dom_sf"/>
</dbReference>
<dbReference type="InterPro" id="IPR017476">
    <property type="entry name" value="UDP-Glc/GDP-Man"/>
</dbReference>
<dbReference type="InterPro" id="IPR014027">
    <property type="entry name" value="UDP-Glc/GDP-Man_DH_C"/>
</dbReference>
<dbReference type="InterPro" id="IPR036220">
    <property type="entry name" value="UDP-Glc/GDP-Man_DH_C_sf"/>
</dbReference>
<dbReference type="InterPro" id="IPR014026">
    <property type="entry name" value="UDP-Glc/GDP-Man_DH_dimer"/>
</dbReference>
<dbReference type="InterPro" id="IPR001732">
    <property type="entry name" value="UDP-Glc/GDP-Man_DH_N"/>
</dbReference>
<dbReference type="InterPro" id="IPR028359">
    <property type="entry name" value="UDP_ManNAc/GlcNAc_DH"/>
</dbReference>
<dbReference type="NCBIfam" id="TIGR03026">
    <property type="entry name" value="NDP-sugDHase"/>
    <property type="match status" value="1"/>
</dbReference>
<dbReference type="NCBIfam" id="NF011729">
    <property type="entry name" value="PRK15182.1"/>
    <property type="match status" value="1"/>
</dbReference>
<dbReference type="PANTHER" id="PTHR43491">
    <property type="entry name" value="UDP-N-ACETYL-D-MANNOSAMINE DEHYDROGENASE"/>
    <property type="match status" value="1"/>
</dbReference>
<dbReference type="PANTHER" id="PTHR43491:SF2">
    <property type="entry name" value="UDP-N-ACETYL-D-MANNOSAMINE DEHYDROGENASE"/>
    <property type="match status" value="1"/>
</dbReference>
<dbReference type="Pfam" id="PF00984">
    <property type="entry name" value="UDPG_MGDP_dh"/>
    <property type="match status" value="1"/>
</dbReference>
<dbReference type="Pfam" id="PF03720">
    <property type="entry name" value="UDPG_MGDP_dh_C"/>
    <property type="match status" value="1"/>
</dbReference>
<dbReference type="Pfam" id="PF03721">
    <property type="entry name" value="UDPG_MGDP_dh_N"/>
    <property type="match status" value="1"/>
</dbReference>
<dbReference type="PIRSF" id="PIRSF500136">
    <property type="entry name" value="UDP_ManNAc_DH"/>
    <property type="match status" value="1"/>
</dbReference>
<dbReference type="PIRSF" id="PIRSF000124">
    <property type="entry name" value="UDPglc_GDPman_dh"/>
    <property type="match status" value="1"/>
</dbReference>
<dbReference type="SMART" id="SM00984">
    <property type="entry name" value="UDPG_MGDP_dh_C"/>
    <property type="match status" value="1"/>
</dbReference>
<dbReference type="SUPFAM" id="SSF48179">
    <property type="entry name" value="6-phosphogluconate dehydrogenase C-terminal domain-like"/>
    <property type="match status" value="1"/>
</dbReference>
<dbReference type="SUPFAM" id="SSF51735">
    <property type="entry name" value="NAD(P)-binding Rossmann-fold domains"/>
    <property type="match status" value="1"/>
</dbReference>
<dbReference type="SUPFAM" id="SSF52413">
    <property type="entry name" value="UDP-glucose/GDP-mannose dehydrogenase C-terminal domain"/>
    <property type="match status" value="1"/>
</dbReference>
<name>WBPO_PSEAI</name>
<organism>
    <name type="scientific">Pseudomonas aeruginosa</name>
    <dbReference type="NCBI Taxonomy" id="287"/>
    <lineage>
        <taxon>Bacteria</taxon>
        <taxon>Pseudomonadati</taxon>
        <taxon>Pseudomonadota</taxon>
        <taxon>Gammaproteobacteria</taxon>
        <taxon>Pseudomonadales</taxon>
        <taxon>Pseudomonadaceae</taxon>
        <taxon>Pseudomonas</taxon>
    </lineage>
</organism>
<accession>Q9RHD7</accession>
<protein>
    <recommendedName>
        <fullName evidence="7">UDP-N-acetyl-D-glucosamine 6-dehydrogenase</fullName>
        <shortName evidence="7">UDP-GlcNAc 6-dehydrogenase</shortName>
        <ecNumber evidence="4">1.1.1.136</ecNumber>
    </recommendedName>
</protein>
<proteinExistence type="evidence at protein level"/>
<keyword id="KW-0961">Cell wall biogenesis/degradation</keyword>
<keyword id="KW-0448">Lipopolysaccharide biosynthesis</keyword>
<keyword id="KW-0520">NAD</keyword>
<keyword id="KW-0560">Oxidoreductase</keyword>
<comment type="function">
    <text evidence="2 3 4">Dehydrogenase required for the biosynthesis of the B-band O antigen of serotype O6 lipopolysaccharide (PubMed:10627048). Is also required for flagellin glycosylation (PubMed:18065759). Catalyzes the conversion of UDP-N-acetylglucosamine (UDP-GlcNAc) to UDP-N-acetylglucosaminuronic acid (UDP-GlcNAcA) (PubMed:18065759). Can also catalyze the conversion of UDP-N-acetyl-galactosamine (UDP-GalNAc) to UDP-N-acetylgalactosaminuronic acid (UDP-GalNAcA), with low efficiency (PubMed:10931835, PubMed:18065759). Can use NAD(+) or NADP(+), with a preference for NAD(+) (PubMed:18065759).</text>
</comment>
<comment type="catalytic activity">
    <reaction evidence="4">
        <text>UDP-N-acetyl-alpha-D-glucosamine + 2 NAD(+) + H2O = UDP-2-acetamido-2-deoxy-alpha-D-glucuronate + 2 NADH + 3 H(+)</text>
        <dbReference type="Rhea" id="RHEA:13325"/>
        <dbReference type="ChEBI" id="CHEBI:15377"/>
        <dbReference type="ChEBI" id="CHEBI:15378"/>
        <dbReference type="ChEBI" id="CHEBI:57540"/>
        <dbReference type="ChEBI" id="CHEBI:57705"/>
        <dbReference type="ChEBI" id="CHEBI:57945"/>
        <dbReference type="ChEBI" id="CHEBI:65040"/>
        <dbReference type="EC" id="1.1.1.136"/>
    </reaction>
    <physiologicalReaction direction="left-to-right" evidence="4">
        <dbReference type="Rhea" id="RHEA:13326"/>
    </physiologicalReaction>
</comment>
<comment type="activity regulation">
    <text evidence="4">Requires either potassium or ammonium-containing salts for activity.</text>
</comment>
<comment type="biophysicochemical properties">
    <kinetics>
        <KM evidence="4">0.047 mM for UDP-GlcNAc</KM>
        <KM evidence="3">22.2 mM for UDP-GlcNAc (refolded enzyme, in the presence of NAD(+))</KM>
        <KM evidence="4">0.27 mM for UDP-GalNAc</KM>
        <KM evidence="3">7.79 mM for UDP-GalNAc (refolded enzyme, in the presence of NAD(+))</KM>
        <KM evidence="4">0.23 mM for NAD(+)</KM>
        <KM evidence="3">0.65 mM for NAD(+) (refolded enzyme)</KM>
        <KM evidence="4">3.7 mM for NADP(+)</KM>
        <KM evidence="3">0.44 mM for NADP(+) (refolded enzyme)</KM>
        <text evidence="3 4">kcat is 110 min(-1) with UDP-GlcNAc as substrate. kcat is 0.69 min(-1) with UDP-GalNAc as substrate. kcat is 110 min(-1) with NAD(+) as substrate. kcat is 0.71 min(-1) with NADP(+) as substrate (PubMed:18065759). kcat is 5.5 min(-1) with UDP-GlcNAc as substrate (refolded enzyme, in the presence of NAD(+)). kcat is 47.8 min(-1) with UDP-GalNAc as substrate (refolded enzyme, in the presence of NAD(+)). kcat is 26.8 min(-1) with NAD(+) as substrate (refolded enzyme). kcat is 16.9 min(-1) with NADP(+) as substrate (refolded enzyme) (PubMed:10931835).</text>
    </kinetics>
    <phDependence>
        <text evidence="3 4">Optimum pH is 8.5.</text>
    </phDependence>
    <temperatureDependence>
        <text evidence="3 4">Activity is relatively constant over a wide temperature range from 37 to 56 degrees Celsius (PubMed:10931835). Optimum temperature is between 37 and 42 degrees Celsius (PubMed:18065759).</text>
    </temperatureDependence>
</comment>
<comment type="pathway">
    <text evidence="2 8 9">Bacterial outer membrane biogenesis; LPS O-antigen biosynthesis.</text>
</comment>
<comment type="disruption phenotype">
    <text evidence="2 4">Deletion of the gene causes deficiency in B-band O antigen biosynthesis (PubMed:10627048). Mutant shows a defect in flagellin glycosylation (PubMed:18065759).</text>
</comment>
<comment type="miscellaneous">
    <text evidence="3 4">Whereas either WbpO or WbpP could initiate the two-step biosynthetic pathway of UDP-GalNAcA, the kinetic parameters of the two enzymes indicate that WbpO acts preferentially before WpbP (PubMed:18065759). WbpO was originally shown to have a higher catalytic efficiency with UDP-D-GalNAc as substrate (PubMed:10931835). However, a subsequent study showed that catalytic efficiency is much higher with UDP-D-GlcNAc as substrate (PubMed:10931835). This discrepancy is likely due to the requirement to refold the C-terminally His-tagged WbpO enzyme during purification in the first study (PubMed:10931835, PubMed:18065759).</text>
</comment>
<comment type="similarity">
    <text evidence="7">Belongs to the UDP-glucose/GDP-mannose dehydrogenase family.</text>
</comment>
<evidence type="ECO:0000250" key="1">
    <source>
        <dbReference type="UniProtKB" id="Q0P8H3"/>
    </source>
</evidence>
<evidence type="ECO:0000269" key="2">
    <source>
    </source>
</evidence>
<evidence type="ECO:0000269" key="3">
    <source>
    </source>
</evidence>
<evidence type="ECO:0000269" key="4">
    <source>
    </source>
</evidence>
<evidence type="ECO:0000303" key="5">
    <source>
    </source>
</evidence>
<evidence type="ECO:0000303" key="6">
    <source>
    </source>
</evidence>
<evidence type="ECO:0000305" key="7"/>
<evidence type="ECO:0000305" key="8">
    <source>
    </source>
</evidence>
<evidence type="ECO:0000305" key="9">
    <source>
    </source>
</evidence>
<evidence type="ECO:0000312" key="10">
    <source>
        <dbReference type="EMBL" id="AAF23997.1"/>
    </source>
</evidence>
<evidence type="ECO:0000312" key="11">
    <source>
        <dbReference type="EMBL" id="AAM27816.1"/>
    </source>
</evidence>
<evidence type="ECO:0000312" key="12">
    <source>
        <dbReference type="EMBL" id="OTI64803.1"/>
    </source>
</evidence>
<gene>
    <name evidence="5 6" type="primary">wbpO</name>
    <name evidence="12" type="ORF">CAZ10_03215</name>
</gene>
<sequence>MKDLKVAVVGLGYVGLPLAVEFGKKRTVVGFDINQGRIAELRQGIDSTLEVDAAELKEASELSFTFNLQDLQKCNVFIVTVPTPIDEHKQPDLTPLVKASESIGKVLKKGDIVIYESTVYPGATEEDCVPVLEKFSGLRFNEDFFAGYSPERINPGDKEHRVSSIKKVTSGSTPEIAELVDSLYREIITAGTHKASSIKVAEAAKVIENTQRDLNIALINELAIIFNRMGIDTEAVLKAAGTKWNFMPFRPGLVGGHCIGVDPYYLTHKAQSIGYHPEIILAGRRLNDGMGAYVVSQLVKAMLKRRIHVDGARVLLMGLTFKENCPDLRNTKVVDIVRELAEYNIQVDVFDPWVSAEDAMHEYGITPVGTPSHGAYDGIILAVAHSEFKNMGAENIRKLGKAEHVLYDLKYLLDEDKSDLRL</sequence>
<feature type="chain" id="PRO_0000461783" description="UDP-N-acetyl-D-glucosamine 6-dehydrogenase">
    <location>
        <begin position="1"/>
        <end position="422"/>
    </location>
</feature>
<feature type="active site" description="Nucleophile" evidence="1">
    <location>
        <position position="258"/>
    </location>
</feature>
<feature type="binding site" evidence="1">
    <location>
        <position position="14"/>
    </location>
    <ligand>
        <name>NAD(+)</name>
        <dbReference type="ChEBI" id="CHEBI:57540"/>
    </ligand>
</feature>
<feature type="binding site" evidence="1">
    <location>
        <position position="32"/>
    </location>
    <ligand>
        <name>NAD(+)</name>
        <dbReference type="ChEBI" id="CHEBI:57540"/>
    </ligand>
</feature>
<feature type="binding site" evidence="1">
    <location>
        <position position="37"/>
    </location>
    <ligand>
        <name>NAD(+)</name>
        <dbReference type="ChEBI" id="CHEBI:57540"/>
    </ligand>
</feature>
<feature type="binding site" evidence="1">
    <location>
        <position position="83"/>
    </location>
    <ligand>
        <name>NAD(+)</name>
        <dbReference type="ChEBI" id="CHEBI:57540"/>
    </ligand>
</feature>
<feature type="binding site" evidence="1">
    <location>
        <position position="118"/>
    </location>
    <ligand>
        <name>NAD(+)</name>
        <dbReference type="ChEBI" id="CHEBI:57540"/>
    </ligand>
</feature>
<feature type="binding site" evidence="1">
    <location>
        <position position="329"/>
    </location>
    <ligand>
        <name>NAD(+)</name>
        <dbReference type="ChEBI" id="CHEBI:57540"/>
    </ligand>
</feature>
<reference evidence="10" key="1">
    <citation type="journal article" date="1999" name="Microbiology">
        <title>Functional analysis of genes responsible for the synthesis of the B-band O antigen of Pseudomonas aeruginosa serotype O6 lipopolysaccharide.</title>
        <authorList>
            <person name="Belanger M."/>
            <person name="Burrows L.L."/>
            <person name="Lam J.S."/>
        </authorList>
    </citation>
    <scope>NUCLEOTIDE SEQUENCE [GENOMIC DNA]</scope>
    <scope>FUNCTION</scope>
    <scope>PATHWAY</scope>
    <scope>DISRUPTION PHENOTYPE</scope>
    <source>
        <strain>ATCC 33354 / Serotype O6</strain>
    </source>
</reference>
<reference evidence="11" key="2">
    <citation type="journal article" date="2002" name="J. Bacteriol.">
        <title>Genetic variation at the O-antigen biosynthetic locus in Pseudomonas aeruginosa.</title>
        <authorList>
            <person name="Raymond C.K."/>
            <person name="Sims E.H."/>
            <person name="Kas A."/>
            <person name="Spencer D.H."/>
            <person name="Kutyavin T.V."/>
            <person name="Ivey R.G."/>
            <person name="Zhou Y."/>
            <person name="Kaul R."/>
            <person name="Clendenning J.B."/>
            <person name="Olson M.V."/>
        </authorList>
    </citation>
    <scope>NUCLEOTIDE SEQUENCE [GENOMIC DNA]</scope>
    <source>
        <strain>Serotype O6</strain>
    </source>
</reference>
<reference evidence="12" key="3">
    <citation type="submission" date="2017-05" db="EMBL/GenBank/DDBJ databases">
        <authorList>
            <person name="Giani T."/>
            <person name="Arena F."/>
            <person name="Pollini S."/>
            <person name="Di Pilato V."/>
            <person name="D'Andrea M.M."/>
            <person name="Henrici De Angelis L."/>
            <person name="Bassetti M."/>
            <person name="Rossolini G.M."/>
        </authorList>
    </citation>
    <scope>NUCLEOTIDE SEQUENCE [LARGE SCALE GENOMIC DNA]</scope>
    <source>
        <strain>S567_C10_BS</strain>
    </source>
</reference>
<reference key="4">
    <citation type="journal article" date="2000" name="J. Biol. Chem.">
        <title>WbpO, a UDP-N-acetyl-D-galactosamine dehydrogenase from Pseudomonas aeruginosa serotype O6.</title>
        <authorList>
            <person name="Zhao X."/>
            <person name="Creuzenet C."/>
            <person name="Belanger M."/>
            <person name="Egbosimba E."/>
            <person name="Li J."/>
            <person name="Lam J.S."/>
        </authorList>
    </citation>
    <scope>FUNCTION</scope>
    <scope>BIOPHYSICOCHEMICAL PROPERTIES</scope>
    <source>
        <strain>Serotype O6</strain>
    </source>
</reference>
<reference key="5">
    <citation type="journal article" date="2008" name="J. Biol. Chem.">
        <title>Flagellin glycosylation in Pseudomonas aeruginosa PAK requires the O-antigen biosynthesis enzyme WbpO.</title>
        <authorList>
            <person name="Miller W.L."/>
            <person name="Matewish M.J."/>
            <person name="McNally D.J."/>
            <person name="Ishiyama N."/>
            <person name="Anderson E.M."/>
            <person name="Brewer D."/>
            <person name="Brisson J.R."/>
            <person name="Berghuis A.M."/>
            <person name="Lam J.S."/>
        </authorList>
    </citation>
    <scope>FUNCTION</scope>
    <scope>CATALYTIC ACTIVITY</scope>
    <scope>ACTIVITY REGULATION</scope>
    <scope>BIOPHYSICOCHEMICAL PROPERTIES</scope>
    <scope>DISRUPTION PHENOTYPE</scope>
    <source>
        <strain>PAK / Serotype O6</strain>
    </source>
</reference>